<feature type="chain" id="PRO_0000111104" description="Small ribosomal subunit protein bS18">
    <location>
        <begin position="1"/>
        <end position="75"/>
    </location>
</feature>
<gene>
    <name evidence="1" type="primary">rpsR</name>
    <name type="ordered locus">ACIAD2431</name>
</gene>
<proteinExistence type="inferred from homology"/>
<protein>
    <recommendedName>
        <fullName evidence="1">Small ribosomal subunit protein bS18</fullName>
    </recommendedName>
    <alternativeName>
        <fullName evidence="2">30S ribosomal protein S18</fullName>
    </alternativeName>
</protein>
<organism>
    <name type="scientific">Acinetobacter baylyi (strain ATCC 33305 / BD413 / ADP1)</name>
    <dbReference type="NCBI Taxonomy" id="62977"/>
    <lineage>
        <taxon>Bacteria</taxon>
        <taxon>Pseudomonadati</taxon>
        <taxon>Pseudomonadota</taxon>
        <taxon>Gammaproteobacteria</taxon>
        <taxon>Moraxellales</taxon>
        <taxon>Moraxellaceae</taxon>
        <taxon>Acinetobacter</taxon>
    </lineage>
</organism>
<comment type="function">
    <text evidence="1">Binds as a heterodimer with protein bS6 to the central domain of the 16S rRNA, where it helps stabilize the platform of the 30S subunit.</text>
</comment>
<comment type="subunit">
    <text evidence="1">Part of the 30S ribosomal subunit. Forms a tight heterodimer with protein bS6.</text>
</comment>
<comment type="similarity">
    <text evidence="1">Belongs to the bacterial ribosomal protein bS18 family.</text>
</comment>
<accession>Q6F9Q9</accession>
<reference key="1">
    <citation type="journal article" date="2004" name="Nucleic Acids Res.">
        <title>Unique features revealed by the genome sequence of Acinetobacter sp. ADP1, a versatile and naturally transformation competent bacterium.</title>
        <authorList>
            <person name="Barbe V."/>
            <person name="Vallenet D."/>
            <person name="Fonknechten N."/>
            <person name="Kreimeyer A."/>
            <person name="Oztas S."/>
            <person name="Labarre L."/>
            <person name="Cruveiller S."/>
            <person name="Robert C."/>
            <person name="Duprat S."/>
            <person name="Wincker P."/>
            <person name="Ornston L.N."/>
            <person name="Weissenbach J."/>
            <person name="Marliere P."/>
            <person name="Cohen G.N."/>
            <person name="Medigue C."/>
        </authorList>
    </citation>
    <scope>NUCLEOTIDE SEQUENCE [LARGE SCALE GENOMIC DNA]</scope>
    <source>
        <strain>ATCC 33305 / BD413 / ADP1</strain>
    </source>
</reference>
<dbReference type="EMBL" id="CR543861">
    <property type="protein sequence ID" value="CAG69204.1"/>
    <property type="molecule type" value="Genomic_DNA"/>
</dbReference>
<dbReference type="RefSeq" id="WP_004928375.1">
    <property type="nucleotide sequence ID" value="NC_005966.1"/>
</dbReference>
<dbReference type="SMR" id="Q6F9Q9"/>
<dbReference type="STRING" id="202950.GCA_001485005_01562"/>
<dbReference type="GeneID" id="67511597"/>
<dbReference type="KEGG" id="aci:ACIAD2431"/>
<dbReference type="eggNOG" id="COG0238">
    <property type="taxonomic scope" value="Bacteria"/>
</dbReference>
<dbReference type="HOGENOM" id="CLU_148710_2_3_6"/>
<dbReference type="OrthoDB" id="9812008at2"/>
<dbReference type="BioCyc" id="ASP62977:ACIAD_RS11115-MONOMER"/>
<dbReference type="Proteomes" id="UP000000430">
    <property type="component" value="Chromosome"/>
</dbReference>
<dbReference type="GO" id="GO:0022627">
    <property type="term" value="C:cytosolic small ribosomal subunit"/>
    <property type="evidence" value="ECO:0007669"/>
    <property type="project" value="TreeGrafter"/>
</dbReference>
<dbReference type="GO" id="GO:0070181">
    <property type="term" value="F:small ribosomal subunit rRNA binding"/>
    <property type="evidence" value="ECO:0007669"/>
    <property type="project" value="TreeGrafter"/>
</dbReference>
<dbReference type="GO" id="GO:0003735">
    <property type="term" value="F:structural constituent of ribosome"/>
    <property type="evidence" value="ECO:0007669"/>
    <property type="project" value="InterPro"/>
</dbReference>
<dbReference type="GO" id="GO:0006412">
    <property type="term" value="P:translation"/>
    <property type="evidence" value="ECO:0007669"/>
    <property type="project" value="UniProtKB-UniRule"/>
</dbReference>
<dbReference type="FunFam" id="4.10.640.10:FF:000001">
    <property type="entry name" value="30S ribosomal protein S18"/>
    <property type="match status" value="1"/>
</dbReference>
<dbReference type="Gene3D" id="4.10.640.10">
    <property type="entry name" value="Ribosomal protein S18"/>
    <property type="match status" value="1"/>
</dbReference>
<dbReference type="HAMAP" id="MF_00270">
    <property type="entry name" value="Ribosomal_bS18"/>
    <property type="match status" value="1"/>
</dbReference>
<dbReference type="InterPro" id="IPR001648">
    <property type="entry name" value="Ribosomal_bS18"/>
</dbReference>
<dbReference type="InterPro" id="IPR018275">
    <property type="entry name" value="Ribosomal_bS18_CS"/>
</dbReference>
<dbReference type="InterPro" id="IPR036870">
    <property type="entry name" value="Ribosomal_bS18_sf"/>
</dbReference>
<dbReference type="NCBIfam" id="TIGR00165">
    <property type="entry name" value="S18"/>
    <property type="match status" value="1"/>
</dbReference>
<dbReference type="PANTHER" id="PTHR13479">
    <property type="entry name" value="30S RIBOSOMAL PROTEIN S18"/>
    <property type="match status" value="1"/>
</dbReference>
<dbReference type="PANTHER" id="PTHR13479:SF40">
    <property type="entry name" value="SMALL RIBOSOMAL SUBUNIT PROTEIN BS18M"/>
    <property type="match status" value="1"/>
</dbReference>
<dbReference type="Pfam" id="PF01084">
    <property type="entry name" value="Ribosomal_S18"/>
    <property type="match status" value="1"/>
</dbReference>
<dbReference type="PRINTS" id="PR00974">
    <property type="entry name" value="RIBOSOMALS18"/>
</dbReference>
<dbReference type="SUPFAM" id="SSF46911">
    <property type="entry name" value="Ribosomal protein S18"/>
    <property type="match status" value="1"/>
</dbReference>
<dbReference type="PROSITE" id="PS00057">
    <property type="entry name" value="RIBOSOMAL_S18"/>
    <property type="match status" value="1"/>
</dbReference>
<keyword id="KW-0687">Ribonucleoprotein</keyword>
<keyword id="KW-0689">Ribosomal protein</keyword>
<keyword id="KW-0694">RNA-binding</keyword>
<keyword id="KW-0699">rRNA-binding</keyword>
<sequence length="75" mass="8976">MARFYRRRKFCRFTAENVAYIDYKDIDTLKQYITENGKIVPSRITGTKARYQRQLALAIKQARYLALIPYTDNHK</sequence>
<name>RS18_ACIAD</name>
<evidence type="ECO:0000255" key="1">
    <source>
        <dbReference type="HAMAP-Rule" id="MF_00270"/>
    </source>
</evidence>
<evidence type="ECO:0000305" key="2"/>